<keyword id="KW-0009">Actin-binding</keyword>
<keyword id="KW-0106">Calcium</keyword>
<keyword id="KW-0112">Calmodulin-binding</keyword>
<keyword id="KW-0965">Cell junction</keyword>
<keyword id="KW-0963">Cytoplasm</keyword>
<keyword id="KW-0968">Cytoplasmic vesicle</keyword>
<keyword id="KW-0206">Cytoskeleton</keyword>
<keyword id="KW-0472">Membrane</keyword>
<keyword id="KW-0493">Microtubule</keyword>
<keyword id="KW-0597">Phosphoprotein</keyword>
<keyword id="KW-1185">Reference proteome</keyword>
<keyword id="KW-0677">Repeat</keyword>
<sequence length="520" mass="56382">MAVWTRATKAGLVELLLRERWVRVVAELSGESLSLTGDAAAVEPEPPAAAFNGLPNGGGGESLPGSPNRGLGPPSPPAPPRGPAGEASASPPVRRVRVVKQEAGGLGISIKGGRENRMPILISKIFPGLAADQSRALRLGDAILSVNGTDLRQATHDQAVQALKRAGKEVLLEVKFIREVTPYIKKPSLVSDLPWEGASPQSPSFSGSEDSGSPKHQNTTKDRKVIPLKMCFAARNLSMPDLENRLIELHSPDSRNTLILRCKDTATAHSWFVAIHTNIMALLPQVLAELNAMLGATSTAGGSKEVKHIAWLAEQAKLDGGRQQWRPVLMAVTEKDLLLYDCMPWTRDAWASPCHSYPLVATRLVHSGSGCRSPSLGSDLTFATRTGSRQGIEMHLFRVETHRDLSTWTRILVQGCHAAAELIKEVSLGCTLSGQEVRFTVHYEHGFTITRDNGGASSILYRYPFERLKMSADDGIRNLYLDFGGPEGELTMDLHSCPKPIVFVLHTFLSAKVTRMGLLV</sequence>
<reference key="1">
    <citation type="journal article" date="1995" name="J. Biol. Chem.">
        <title>Mouse alpha 1- and beta 2-syntrophin gene structure, chromosome localization, and homology with a discs large domain.</title>
        <authorList>
            <person name="Adams M.E."/>
            <person name="Dwyer T.M."/>
            <person name="Dowler L.L."/>
            <person name="White R.A."/>
            <person name="Froehner S.C."/>
        </authorList>
    </citation>
    <scope>NUCLEOTIDE SEQUENCE [MRNA]</scope>
    <source>
        <tissue>Diaphragm</tissue>
    </source>
</reference>
<reference key="2">
    <citation type="journal article" date="1993" name="Neuron">
        <title>Two forms of mouse syntrophin, a 58 kDa dystrophin-associated protein, differ in primary structure and tissue distribution.</title>
        <authorList>
            <person name="Adams M.E."/>
            <person name="Butler M.H."/>
            <person name="Dwyer T.M."/>
            <person name="Peters M.F."/>
            <person name="Murnane A.A."/>
            <person name="Froehner S.C."/>
        </authorList>
    </citation>
    <scope>NUCLEOTIDE SEQUENCE [MRNA] OF 91-520</scope>
    <source>
        <tissue>Diaphragm</tissue>
    </source>
</reference>
<reference key="3">
    <citation type="journal article" date="1997" name="J. Cell Biol.">
        <title>Differential association of syntrophin pairs with the dystrophin complex.</title>
        <authorList>
            <person name="Peters M.F."/>
            <person name="Adams M.E."/>
            <person name="Froehner S.C."/>
        </authorList>
    </citation>
    <scope>SUBCELLULAR LOCATION</scope>
    <scope>TISSUE SPECIFICITY</scope>
    <scope>INTERACTION WITH UTRN</scope>
</reference>
<reference key="4">
    <citation type="journal article" date="1998" name="J. Neurosci.">
        <title>Interaction of muscle and brain sodium channels with multiple members of the syntrophin family of dystrophin-associated proteins.</title>
        <authorList>
            <person name="Gee S.H."/>
            <person name="Madhavan R."/>
            <person name="Levinson S.R."/>
            <person name="Caldwell J.H."/>
            <person name="Sealock R."/>
            <person name="Froehner S.C."/>
        </authorList>
    </citation>
    <scope>INTERACTION WITH SCN4A AND SCN5A</scope>
</reference>
<reference key="5">
    <citation type="journal article" date="1999" name="Nat. Neurosci.">
        <title>Interactions between beta 2-syntrophin and a family of microtubule-associated serine/threonine kinases.</title>
        <authorList>
            <person name="Lumeng C."/>
            <person name="Phelps S."/>
            <person name="Crawford G.E."/>
            <person name="Walden P.D."/>
            <person name="Barald K."/>
            <person name="Chamberlain J.S."/>
        </authorList>
    </citation>
    <scope>INTERACTION WITH SAST; MAST205; MICROTUBULES AND MICROTUBULE-ASSOCIATED PROTEINS</scope>
</reference>
<reference key="6">
    <citation type="journal article" date="2000" name="J. Cell Sci.">
        <title>Assembly of multiple dystrobrevin-containing complexes in the kidney.</title>
        <authorList>
            <person name="Loh N.Y."/>
            <person name="Newey S.E."/>
            <person name="Davies K.E."/>
            <person name="Blake D.J."/>
        </authorList>
    </citation>
    <scope>INTERACTION WITH DTNB</scope>
</reference>
<reference key="7">
    <citation type="journal article" date="2007" name="Mol. Cell. Proteomics">
        <title>Qualitative and quantitative analyses of protein phosphorylation in naive and stimulated mouse synaptosomal preparations.</title>
        <authorList>
            <person name="Munton R.P."/>
            <person name="Tweedie-Cullen R."/>
            <person name="Livingstone-Zatchej M."/>
            <person name="Weinandy F."/>
            <person name="Waidelich M."/>
            <person name="Longo D."/>
            <person name="Gehrig P."/>
            <person name="Potthast F."/>
            <person name="Rutishauser D."/>
            <person name="Gerrits B."/>
            <person name="Panse C."/>
            <person name="Schlapbach R."/>
            <person name="Mansuy I.M."/>
        </authorList>
    </citation>
    <scope>IDENTIFICATION BY MASS SPECTROMETRY [LARGE SCALE ANALYSIS]</scope>
    <source>
        <tissue>Brain cortex</tissue>
    </source>
</reference>
<reference key="8">
    <citation type="journal article" date="2007" name="Proc. Natl. Acad. Sci. U.S.A.">
        <title>Large-scale phosphorylation analysis of mouse liver.</title>
        <authorList>
            <person name="Villen J."/>
            <person name="Beausoleil S.A."/>
            <person name="Gerber S.A."/>
            <person name="Gygi S.P."/>
        </authorList>
    </citation>
    <scope>IDENTIFICATION BY MASS SPECTROMETRY [LARGE SCALE ANALYSIS]</scope>
    <source>
        <tissue>Liver</tissue>
    </source>
</reference>
<reference key="9">
    <citation type="journal article" date="2009" name="Immunity">
        <title>The phagosomal proteome in interferon-gamma-activated macrophages.</title>
        <authorList>
            <person name="Trost M."/>
            <person name="English L."/>
            <person name="Lemieux S."/>
            <person name="Courcelles M."/>
            <person name="Desjardins M."/>
            <person name="Thibault P."/>
        </authorList>
    </citation>
    <scope>PHOSPHORYLATION [LARGE SCALE ANALYSIS] AT SER-75 AND SER-90</scope>
    <scope>IDENTIFICATION BY MASS SPECTROMETRY [LARGE SCALE ANALYSIS]</scope>
</reference>
<reference key="10">
    <citation type="journal article" date="2009" name="Mol. Cell. Proteomics">
        <title>Large scale localization of protein phosphorylation by use of electron capture dissociation mass spectrometry.</title>
        <authorList>
            <person name="Sweet S.M."/>
            <person name="Bailey C.M."/>
            <person name="Cunningham D.L."/>
            <person name="Heath J.K."/>
            <person name="Cooper H.J."/>
        </authorList>
    </citation>
    <scope>PHOSPHORYLATION [LARGE SCALE ANALYSIS] AT SER-90</scope>
    <scope>IDENTIFICATION BY MASS SPECTROMETRY [LARGE SCALE ANALYSIS]</scope>
    <source>
        <tissue>Embryonic fibroblast</tissue>
    </source>
</reference>
<reference key="11">
    <citation type="journal article" date="2010" name="Cell">
        <title>A tissue-specific atlas of mouse protein phosphorylation and expression.</title>
        <authorList>
            <person name="Huttlin E.L."/>
            <person name="Jedrychowski M.P."/>
            <person name="Elias J.E."/>
            <person name="Goswami T."/>
            <person name="Rad R."/>
            <person name="Beausoleil S.A."/>
            <person name="Villen J."/>
            <person name="Haas W."/>
            <person name="Sowa M.E."/>
            <person name="Gygi S.P."/>
        </authorList>
    </citation>
    <scope>PHOSPHORYLATION [LARGE SCALE ANALYSIS] AT SER-202; SER-213; SER-373 AND SER-375</scope>
    <scope>IDENTIFICATION BY MASS SPECTROMETRY [LARGE SCALE ANALYSIS]</scope>
    <source>
        <tissue>Brain</tissue>
        <tissue>Brown adipose tissue</tissue>
        <tissue>Heart</tissue>
        <tissue>Kidney</tissue>
        <tissue>Lung</tissue>
        <tissue>Spleen</tissue>
        <tissue>Testis</tissue>
    </source>
</reference>
<protein>
    <recommendedName>
        <fullName>Beta-2-syntrophin</fullName>
    </recommendedName>
    <alternativeName>
        <fullName>59 kDa dystrophin-associated protein A1 basic component 2</fullName>
    </alternativeName>
    <alternativeName>
        <fullName>Syntrophin-3</fullName>
        <shortName>SNT3</shortName>
    </alternativeName>
    <alternativeName>
        <fullName>Syntrophin-like</fullName>
        <shortName>SNTL</shortName>
    </alternativeName>
</protein>
<comment type="function">
    <text evidence="1">Adapter protein that binds to and probably organizes the subcellular localization of a variety of membrane proteins. May link various receptors to the actin cytoskeleton and the dystrophin glycoprotein complex. May play a role in the regulation of secretory granules via its interaction with PTPRN (By similarity).</text>
</comment>
<comment type="subunit">
    <text evidence="1 6 7 8 9 10">Monomer and homodimer (Probable). Interacts with the dystrophin protein DMD and related protein DTNA; and with the other members of the syntrophin family: SNTA1 and SNTB1. Interacts with the neuroregulin receptor ERBB4. Interacts with PTPRN when phosphorylated, protecting PTPRN from protein cleavage by CAPN1. Dephosphorylation upon insulin stimulation disrupts the interaction with PTPRN and results in the cleavage of PTPRN (By similarity). Interacts with the sodium channel proteins SCN4A and SCN5A. Interacts with SAST, MAST205, microtubules and microtubule-associated proteins. Interacts with the dystrophin related protein UTRN. Interacts with DTNB (PubMed:10893187).</text>
</comment>
<comment type="subcellular location">
    <subcellularLocation>
        <location evidence="8">Membrane</location>
    </subcellularLocation>
    <subcellularLocation>
        <location evidence="8">Cytoplasmic vesicle</location>
        <location evidence="8">Secretory vesicle membrane</location>
        <topology evidence="8">Peripheral membrane protein</topology>
    </subcellularLocation>
    <subcellularLocation>
        <location evidence="1">Cell junction</location>
    </subcellularLocation>
    <subcellularLocation>
        <location evidence="8">Cytoplasm</location>
        <location evidence="8">Cytoskeleton</location>
    </subcellularLocation>
    <text evidence="1">Membrane-associated. In insulinoma cell line, it is enriched in secretory granules (By similarity). In muscle, it is exclusively localized at the neuromuscular junction.</text>
</comment>
<comment type="tissue specificity">
    <text evidence="8">Ubiquitous. Expressed at high levels in the testis.</text>
</comment>
<comment type="domain">
    <text evidence="1">The PH 1 domain mediates the oligomerization in a calcium dependent manner.</text>
</comment>
<comment type="domain">
    <text evidence="1">The PDZ domain binds to the last three or four amino acids of ion channels and receptor proteins. The association with dystrophin or related proteins probably leaves the PDZ domain available to recruit proteins to the membrane (By similarity).</text>
</comment>
<comment type="domain">
    <text evidence="1">The SU domain binds calmodulin in a calcium-dependent manner.</text>
</comment>
<comment type="PTM">
    <text evidence="1">Phosphorylated. Partially dephosphorylated upon insulin stimulation (By similarity).</text>
</comment>
<comment type="similarity">
    <text evidence="10">Belongs to the syntrophin family.</text>
</comment>
<name>SNTB2_MOUSE</name>
<gene>
    <name type="primary">Sntb2</name>
    <name type="synonym">Snt2b2</name>
</gene>
<proteinExistence type="evidence at protein level"/>
<accession>Q61235</accession>
<feature type="chain" id="PRO_0000184012" description="Beta-2-syntrophin">
    <location>
        <begin position="1"/>
        <end position="520"/>
    </location>
</feature>
<feature type="domain" description="PDZ" evidence="3">
    <location>
        <begin position="95"/>
        <end position="178"/>
    </location>
</feature>
<feature type="domain" description="PH 1" evidence="4">
    <location>
        <begin position="143"/>
        <end position="280"/>
    </location>
</feature>
<feature type="domain" description="PH 2" evidence="4">
    <location>
        <begin position="305"/>
        <end position="417"/>
    </location>
</feature>
<feature type="domain" description="SU">
    <location>
        <begin position="464"/>
        <end position="520"/>
    </location>
</feature>
<feature type="region of interest" description="Disordered" evidence="5">
    <location>
        <begin position="45"/>
        <end position="95"/>
    </location>
</feature>
<feature type="region of interest" description="Disordered" evidence="5">
    <location>
        <begin position="195"/>
        <end position="220"/>
    </location>
</feature>
<feature type="region of interest" description="Calmodulin-binding" evidence="1">
    <location>
        <begin position="498"/>
        <end position="520"/>
    </location>
</feature>
<feature type="compositionally biased region" description="Low complexity" evidence="5">
    <location>
        <begin position="63"/>
        <end position="72"/>
    </location>
</feature>
<feature type="compositionally biased region" description="Pro residues" evidence="5">
    <location>
        <begin position="73"/>
        <end position="82"/>
    </location>
</feature>
<feature type="compositionally biased region" description="Low complexity" evidence="5">
    <location>
        <begin position="83"/>
        <end position="93"/>
    </location>
</feature>
<feature type="compositionally biased region" description="Low complexity" evidence="5">
    <location>
        <begin position="197"/>
        <end position="211"/>
    </location>
</feature>
<feature type="modified residue" description="Phosphoserine" evidence="12">
    <location>
        <position position="75"/>
    </location>
</feature>
<feature type="modified residue" description="Phosphoserine" evidence="11 12">
    <location>
        <position position="90"/>
    </location>
</feature>
<feature type="modified residue" description="Phosphoserine" evidence="2">
    <location>
        <position position="109"/>
    </location>
</feature>
<feature type="modified residue" description="Phosphoserine" evidence="2">
    <location>
        <position position="191"/>
    </location>
</feature>
<feature type="modified residue" description="Phosphoserine" evidence="13">
    <location>
        <position position="202"/>
    </location>
</feature>
<feature type="modified residue" description="Phosphoserine" evidence="13">
    <location>
        <position position="213"/>
    </location>
</feature>
<feature type="modified residue" description="Phosphoserine" evidence="13">
    <location>
        <position position="373"/>
    </location>
</feature>
<feature type="modified residue" description="Phosphoserine" evidence="13">
    <location>
        <position position="375"/>
    </location>
</feature>
<evidence type="ECO:0000250" key="1"/>
<evidence type="ECO:0000250" key="2">
    <source>
        <dbReference type="UniProtKB" id="Q13425"/>
    </source>
</evidence>
<evidence type="ECO:0000255" key="3">
    <source>
        <dbReference type="PROSITE-ProRule" id="PRU00143"/>
    </source>
</evidence>
<evidence type="ECO:0000255" key="4">
    <source>
        <dbReference type="PROSITE-ProRule" id="PRU00145"/>
    </source>
</evidence>
<evidence type="ECO:0000256" key="5">
    <source>
        <dbReference type="SAM" id="MobiDB-lite"/>
    </source>
</evidence>
<evidence type="ECO:0000269" key="6">
    <source>
    </source>
</evidence>
<evidence type="ECO:0000269" key="7">
    <source>
    </source>
</evidence>
<evidence type="ECO:0000269" key="8">
    <source>
    </source>
</evidence>
<evidence type="ECO:0000269" key="9">
    <source>
    </source>
</evidence>
<evidence type="ECO:0000305" key="10"/>
<evidence type="ECO:0007744" key="11">
    <source>
    </source>
</evidence>
<evidence type="ECO:0007744" key="12">
    <source>
    </source>
</evidence>
<evidence type="ECO:0007744" key="13">
    <source>
    </source>
</evidence>
<organism>
    <name type="scientific">Mus musculus</name>
    <name type="common">Mouse</name>
    <dbReference type="NCBI Taxonomy" id="10090"/>
    <lineage>
        <taxon>Eukaryota</taxon>
        <taxon>Metazoa</taxon>
        <taxon>Chordata</taxon>
        <taxon>Craniata</taxon>
        <taxon>Vertebrata</taxon>
        <taxon>Euteleostomi</taxon>
        <taxon>Mammalia</taxon>
        <taxon>Eutheria</taxon>
        <taxon>Euarchontoglires</taxon>
        <taxon>Glires</taxon>
        <taxon>Rodentia</taxon>
        <taxon>Myomorpha</taxon>
        <taxon>Muroidea</taxon>
        <taxon>Muridae</taxon>
        <taxon>Murinae</taxon>
        <taxon>Mus</taxon>
        <taxon>Mus</taxon>
    </lineage>
</organism>
<dbReference type="EMBL" id="U00678">
    <property type="protein sequence ID" value="AAC53060.1"/>
    <property type="molecule type" value="mRNA"/>
</dbReference>
<dbReference type="CCDS" id="CCDS22642.1"/>
<dbReference type="RefSeq" id="NP_033255.1">
    <property type="nucleotide sequence ID" value="NM_009229.5"/>
</dbReference>
<dbReference type="SMR" id="Q61235"/>
<dbReference type="BioGRID" id="203384">
    <property type="interactions" value="6"/>
</dbReference>
<dbReference type="CORUM" id="Q61235"/>
<dbReference type="FunCoup" id="Q61235">
    <property type="interactions" value="1633"/>
</dbReference>
<dbReference type="IntAct" id="Q61235">
    <property type="interactions" value="10"/>
</dbReference>
<dbReference type="MINT" id="Q61235"/>
<dbReference type="STRING" id="10090.ENSMUSP00000148684"/>
<dbReference type="GlyGen" id="Q61235">
    <property type="glycosylation" value="2 sites, 1 N-linked glycan (1 site), 1 O-linked glycan (1 site)"/>
</dbReference>
<dbReference type="iPTMnet" id="Q61235"/>
<dbReference type="PhosphoSitePlus" id="Q61235"/>
<dbReference type="jPOST" id="Q61235"/>
<dbReference type="PaxDb" id="10090-ENSMUSP00000037324"/>
<dbReference type="ProteomicsDB" id="261536"/>
<dbReference type="Pumba" id="Q61235"/>
<dbReference type="Antibodypedia" id="656">
    <property type="antibodies" value="149 antibodies from 20 providers"/>
</dbReference>
<dbReference type="DNASU" id="20650"/>
<dbReference type="Ensembl" id="ENSMUST00000212524.2">
    <property type="protein sequence ID" value="ENSMUSP00000148684.2"/>
    <property type="gene ID" value="ENSMUSG00000041308.7"/>
</dbReference>
<dbReference type="GeneID" id="20650"/>
<dbReference type="KEGG" id="mmu:20650"/>
<dbReference type="UCSC" id="uc009ngt.1">
    <property type="organism name" value="mouse"/>
</dbReference>
<dbReference type="AGR" id="MGI:101771"/>
<dbReference type="CTD" id="6645"/>
<dbReference type="MGI" id="MGI:101771">
    <property type="gene designation" value="Sntb2"/>
</dbReference>
<dbReference type="VEuPathDB" id="HostDB:ENSMUSG00000041308"/>
<dbReference type="eggNOG" id="KOG3551">
    <property type="taxonomic scope" value="Eukaryota"/>
</dbReference>
<dbReference type="GeneTree" id="ENSGT00950000182863"/>
<dbReference type="HOGENOM" id="CLU_026406_3_1_1"/>
<dbReference type="InParanoid" id="Q61235"/>
<dbReference type="OMA" id="DGGRQHW"/>
<dbReference type="PhylomeDB" id="Q61235"/>
<dbReference type="TreeFam" id="TF317932"/>
<dbReference type="Reactome" id="R-MMU-9913351">
    <property type="pathway name" value="Formation of the dystrophin-glycoprotein complex (DGC)"/>
</dbReference>
<dbReference type="BioGRID-ORCS" id="20650">
    <property type="hits" value="1 hit in 77 CRISPR screens"/>
</dbReference>
<dbReference type="ChiTaRS" id="Sntb2">
    <property type="organism name" value="mouse"/>
</dbReference>
<dbReference type="PRO" id="PR:Q61235"/>
<dbReference type="Proteomes" id="UP000000589">
    <property type="component" value="Chromosome 8"/>
</dbReference>
<dbReference type="RNAct" id="Q61235">
    <property type="molecule type" value="protein"/>
</dbReference>
<dbReference type="Bgee" id="ENSMUSG00000041308">
    <property type="expression patterns" value="Expressed in lumbar dorsal root ganglion and 223 other cell types or tissues"/>
</dbReference>
<dbReference type="ExpressionAtlas" id="Q61235">
    <property type="expression patterns" value="baseline and differential"/>
</dbReference>
<dbReference type="GO" id="GO:0070161">
    <property type="term" value="C:anchoring junction"/>
    <property type="evidence" value="ECO:0007669"/>
    <property type="project" value="UniProtKB-SubCell"/>
</dbReference>
<dbReference type="GO" id="GO:0005874">
    <property type="term" value="C:microtubule"/>
    <property type="evidence" value="ECO:0007669"/>
    <property type="project" value="UniProtKB-KW"/>
</dbReference>
<dbReference type="GO" id="GO:0032991">
    <property type="term" value="C:protein-containing complex"/>
    <property type="evidence" value="ECO:0000266"/>
    <property type="project" value="MGI"/>
</dbReference>
<dbReference type="GO" id="GO:0045202">
    <property type="term" value="C:synapse"/>
    <property type="evidence" value="ECO:0000314"/>
    <property type="project" value="MGI"/>
</dbReference>
<dbReference type="GO" id="GO:0030658">
    <property type="term" value="C:transport vesicle membrane"/>
    <property type="evidence" value="ECO:0007669"/>
    <property type="project" value="UniProtKB-SubCell"/>
</dbReference>
<dbReference type="GO" id="GO:0003779">
    <property type="term" value="F:actin binding"/>
    <property type="evidence" value="ECO:0007669"/>
    <property type="project" value="UniProtKB-KW"/>
</dbReference>
<dbReference type="GO" id="GO:0005516">
    <property type="term" value="F:calmodulin binding"/>
    <property type="evidence" value="ECO:0007669"/>
    <property type="project" value="UniProtKB-KW"/>
</dbReference>
<dbReference type="GO" id="GO:0005198">
    <property type="term" value="F:structural molecule activity"/>
    <property type="evidence" value="ECO:0007669"/>
    <property type="project" value="InterPro"/>
</dbReference>
<dbReference type="CDD" id="cd06801">
    <property type="entry name" value="PDZ_syntrophin-like"/>
    <property type="match status" value="1"/>
</dbReference>
<dbReference type="CDD" id="cd01258">
    <property type="entry name" value="PHsplit_syntrophin"/>
    <property type="match status" value="1"/>
</dbReference>
<dbReference type="FunFam" id="2.30.42.10:FF:000052">
    <property type="entry name" value="Syntrophin beta 1"/>
    <property type="match status" value="1"/>
</dbReference>
<dbReference type="FunFam" id="2.30.29.30:FF:000251">
    <property type="entry name" value="Syntrophin beta 2"/>
    <property type="match status" value="1"/>
</dbReference>
<dbReference type="Gene3D" id="2.30.42.10">
    <property type="match status" value="1"/>
</dbReference>
<dbReference type="Gene3D" id="2.30.29.30">
    <property type="entry name" value="Pleckstrin-homology domain (PH domain)/Phosphotyrosine-binding domain (PTB)"/>
    <property type="match status" value="1"/>
</dbReference>
<dbReference type="InterPro" id="IPR001478">
    <property type="entry name" value="PDZ"/>
</dbReference>
<dbReference type="InterPro" id="IPR036034">
    <property type="entry name" value="PDZ_sf"/>
</dbReference>
<dbReference type="InterPro" id="IPR011993">
    <property type="entry name" value="PH-like_dom_sf"/>
</dbReference>
<dbReference type="InterPro" id="IPR001849">
    <property type="entry name" value="PH_domain"/>
</dbReference>
<dbReference type="InterPro" id="IPR041428">
    <property type="entry name" value="PHsplit_syntrophin"/>
</dbReference>
<dbReference type="InterPro" id="IPR015482">
    <property type="entry name" value="Syntrophin"/>
</dbReference>
<dbReference type="InterPro" id="IPR055108">
    <property type="entry name" value="Syntrophin_4th"/>
</dbReference>
<dbReference type="PANTHER" id="PTHR10554:SF8">
    <property type="entry name" value="BETA-2-SYNTROPHIN"/>
    <property type="match status" value="1"/>
</dbReference>
<dbReference type="PANTHER" id="PTHR10554">
    <property type="entry name" value="SYNTROPHIN"/>
    <property type="match status" value="1"/>
</dbReference>
<dbReference type="Pfam" id="PF00595">
    <property type="entry name" value="PDZ"/>
    <property type="match status" value="1"/>
</dbReference>
<dbReference type="Pfam" id="PF00169">
    <property type="entry name" value="PH"/>
    <property type="match status" value="1"/>
</dbReference>
<dbReference type="Pfam" id="PF18012">
    <property type="entry name" value="PH_17"/>
    <property type="match status" value="1"/>
</dbReference>
<dbReference type="Pfam" id="PF23012">
    <property type="entry name" value="Syntrophin_4th"/>
    <property type="match status" value="1"/>
</dbReference>
<dbReference type="SMART" id="SM00228">
    <property type="entry name" value="PDZ"/>
    <property type="match status" value="1"/>
</dbReference>
<dbReference type="SMART" id="SM00233">
    <property type="entry name" value="PH"/>
    <property type="match status" value="2"/>
</dbReference>
<dbReference type="SUPFAM" id="SSF50156">
    <property type="entry name" value="PDZ domain-like"/>
    <property type="match status" value="1"/>
</dbReference>
<dbReference type="SUPFAM" id="SSF50729">
    <property type="entry name" value="PH domain-like"/>
    <property type="match status" value="1"/>
</dbReference>
<dbReference type="PROSITE" id="PS50106">
    <property type="entry name" value="PDZ"/>
    <property type="match status" value="1"/>
</dbReference>
<dbReference type="PROSITE" id="PS50003">
    <property type="entry name" value="PH_DOMAIN"/>
    <property type="match status" value="1"/>
</dbReference>